<gene>
    <name evidence="2" type="primary">ERB1</name>
    <name type="ordered locus">CAGL0L04950g</name>
</gene>
<evidence type="ECO:0000250" key="1"/>
<evidence type="ECO:0000255" key="2">
    <source>
        <dbReference type="HAMAP-Rule" id="MF_03027"/>
    </source>
</evidence>
<evidence type="ECO:0000256" key="3">
    <source>
        <dbReference type="SAM" id="MobiDB-lite"/>
    </source>
</evidence>
<keyword id="KW-0539">Nucleus</keyword>
<keyword id="KW-1185">Reference proteome</keyword>
<keyword id="KW-0677">Repeat</keyword>
<keyword id="KW-0690">Ribosome biogenesis</keyword>
<keyword id="KW-0698">rRNA processing</keyword>
<keyword id="KW-0853">WD repeat</keyword>
<protein>
    <recommendedName>
        <fullName evidence="2">Ribosome biogenesis protein ERB1</fullName>
    </recommendedName>
    <alternativeName>
        <fullName evidence="2">Eukaryotic ribosome biogenesis protein 1</fullName>
    </alternativeName>
</protein>
<sequence length="805" mass="91655">MVKGRKSQKADKVTKAKKRVADEVDESESEPELQVEGLIDAEAESEDDESFESAEENASAEEDEEDEEDEEDSDAELNKLLAEEEGDDSESEYNTSDFSEDDTKSMTDKLSGVKLTTIAEPIIKTKFSDGTPRVIKPEINPVYDSDDSDIESKNTIGNIPLSVYDEMPHIGYDVNGKRIMRPARASALDQLLDTIELPEGWTGLLDKESGASLNISKEELELISKIQRNEQTDESTNPYEPLIDWFTRHEEVMPLSAAPEPKRRFVPSKNEAKRIMKIVKAIREGRIIPPKKMKELREKEKSEDFNYDLWGDSTETNDHIMNLRAPKLPPPTNEESYNPPAEYLPTEEEIKEWENTEYSERERNFVPKKYDSLRKVPGYTESVRERFERSLDLYLAPRMRKNKLNIDPESLIPELPSPKDLRPFPIRCSTIYSGHEGKIRTLSIDPTGIWLATGSDDGSVRIWEILTGREVYRVQLVNKEDNPEDNIHSVEWNPDGSVGILAVAVGNNIFLIVPPIFGYDIENAGKVRIEHGFGYDTFGSTKKANLEVNGSDLESDDEAANANTAVKKQVAQWHKPTQRQMEQDICIVIVCKKPVKKLSWHRKGDYFVTVQPDSGNTSVLIHQLSKHLTQSPFRKSKGIIMDAKFHPFKPQLFVCSQRYVRIYDLSQQVLVKKLLPGARWLSNIDIHPRGDNLIASSYDKRVLWHDLDLAATPYKTLRYHDKAVRSTTFHKKLPLFCSAADDGFIHIFHATVYDDMMKNPMIVPLKKLTGHKVQGHLGVLDTIWHPKEAWLFSAGADNTARMWTT</sequence>
<reference key="1">
    <citation type="journal article" date="2004" name="Nature">
        <title>Genome evolution in yeasts.</title>
        <authorList>
            <person name="Dujon B."/>
            <person name="Sherman D."/>
            <person name="Fischer G."/>
            <person name="Durrens P."/>
            <person name="Casaregola S."/>
            <person name="Lafontaine I."/>
            <person name="de Montigny J."/>
            <person name="Marck C."/>
            <person name="Neuveglise C."/>
            <person name="Talla E."/>
            <person name="Goffard N."/>
            <person name="Frangeul L."/>
            <person name="Aigle M."/>
            <person name="Anthouard V."/>
            <person name="Babour A."/>
            <person name="Barbe V."/>
            <person name="Barnay S."/>
            <person name="Blanchin S."/>
            <person name="Beckerich J.-M."/>
            <person name="Beyne E."/>
            <person name="Bleykasten C."/>
            <person name="Boisrame A."/>
            <person name="Boyer J."/>
            <person name="Cattolico L."/>
            <person name="Confanioleri F."/>
            <person name="de Daruvar A."/>
            <person name="Despons L."/>
            <person name="Fabre E."/>
            <person name="Fairhead C."/>
            <person name="Ferry-Dumazet H."/>
            <person name="Groppi A."/>
            <person name="Hantraye F."/>
            <person name="Hennequin C."/>
            <person name="Jauniaux N."/>
            <person name="Joyet P."/>
            <person name="Kachouri R."/>
            <person name="Kerrest A."/>
            <person name="Koszul R."/>
            <person name="Lemaire M."/>
            <person name="Lesur I."/>
            <person name="Ma L."/>
            <person name="Muller H."/>
            <person name="Nicaud J.-M."/>
            <person name="Nikolski M."/>
            <person name="Oztas S."/>
            <person name="Ozier-Kalogeropoulos O."/>
            <person name="Pellenz S."/>
            <person name="Potier S."/>
            <person name="Richard G.-F."/>
            <person name="Straub M.-L."/>
            <person name="Suleau A."/>
            <person name="Swennen D."/>
            <person name="Tekaia F."/>
            <person name="Wesolowski-Louvel M."/>
            <person name="Westhof E."/>
            <person name="Wirth B."/>
            <person name="Zeniou-Meyer M."/>
            <person name="Zivanovic Y."/>
            <person name="Bolotin-Fukuhara M."/>
            <person name="Thierry A."/>
            <person name="Bouchier C."/>
            <person name="Caudron B."/>
            <person name="Scarpelli C."/>
            <person name="Gaillardin C."/>
            <person name="Weissenbach J."/>
            <person name="Wincker P."/>
            <person name="Souciet J.-L."/>
        </authorList>
    </citation>
    <scope>NUCLEOTIDE SEQUENCE [LARGE SCALE GENOMIC DNA]</scope>
    <source>
        <strain>ATCC 2001 / BCRC 20586 / JCM 3761 / NBRC 0622 / NRRL Y-65 / CBS 138</strain>
    </source>
</reference>
<organism>
    <name type="scientific">Candida glabrata (strain ATCC 2001 / BCRC 20586 / JCM 3761 / NBRC 0622 / NRRL Y-65 / CBS 138)</name>
    <name type="common">Yeast</name>
    <name type="synonym">Nakaseomyces glabratus</name>
    <dbReference type="NCBI Taxonomy" id="284593"/>
    <lineage>
        <taxon>Eukaryota</taxon>
        <taxon>Fungi</taxon>
        <taxon>Dikarya</taxon>
        <taxon>Ascomycota</taxon>
        <taxon>Saccharomycotina</taxon>
        <taxon>Saccharomycetes</taxon>
        <taxon>Saccharomycetales</taxon>
        <taxon>Saccharomycetaceae</taxon>
        <taxon>Nakaseomyces</taxon>
    </lineage>
</organism>
<accession>Q6FLA4</accession>
<feature type="chain" id="PRO_0000370424" description="Ribosome biogenesis protein ERB1">
    <location>
        <begin position="1"/>
        <end position="805"/>
    </location>
</feature>
<feature type="repeat" description="WD 1">
    <location>
        <begin position="434"/>
        <end position="473"/>
    </location>
</feature>
<feature type="repeat" description="WD 2">
    <location>
        <begin position="482"/>
        <end position="522"/>
    </location>
</feature>
<feature type="repeat" description="WD 3">
    <location>
        <begin position="590"/>
        <end position="632"/>
    </location>
</feature>
<feature type="repeat" description="WD 4">
    <location>
        <begin position="635"/>
        <end position="673"/>
    </location>
</feature>
<feature type="repeat" description="WD 5">
    <location>
        <begin position="676"/>
        <end position="715"/>
    </location>
</feature>
<feature type="repeat" description="WD 6">
    <location>
        <begin position="719"/>
        <end position="758"/>
    </location>
</feature>
<feature type="repeat" description="WD 7">
    <location>
        <begin position="775"/>
        <end position="805"/>
    </location>
</feature>
<feature type="region of interest" description="Disordered" evidence="3">
    <location>
        <begin position="1"/>
        <end position="105"/>
    </location>
</feature>
<feature type="region of interest" description="Required for interaction with NOP7" evidence="1">
    <location>
        <begin position="264"/>
        <end position="382"/>
    </location>
</feature>
<feature type="region of interest" description="Required for interaction with YTM1" evidence="1">
    <location>
        <begin position="382"/>
        <end position="418"/>
    </location>
</feature>
<feature type="compositionally biased region" description="Basic and acidic residues" evidence="3">
    <location>
        <begin position="8"/>
        <end position="22"/>
    </location>
</feature>
<feature type="compositionally biased region" description="Acidic residues" evidence="3">
    <location>
        <begin position="23"/>
        <end position="75"/>
    </location>
</feature>
<dbReference type="EMBL" id="CR380958">
    <property type="protein sequence ID" value="CAG61960.1"/>
    <property type="molecule type" value="Genomic_DNA"/>
</dbReference>
<dbReference type="RefSeq" id="XP_448990.1">
    <property type="nucleotide sequence ID" value="XM_448990.1"/>
</dbReference>
<dbReference type="SMR" id="Q6FLA4"/>
<dbReference type="FunCoup" id="Q6FLA4">
    <property type="interactions" value="1164"/>
</dbReference>
<dbReference type="STRING" id="284593.Q6FLA4"/>
<dbReference type="EnsemblFungi" id="CAGL0L04950g-T">
    <property type="protein sequence ID" value="CAGL0L04950g-T-p1"/>
    <property type="gene ID" value="CAGL0L04950g"/>
</dbReference>
<dbReference type="KEGG" id="cgr:2890714"/>
<dbReference type="CGD" id="CAL0135218">
    <property type="gene designation" value="CAGL0L04950g"/>
</dbReference>
<dbReference type="VEuPathDB" id="FungiDB:CAGL0L04950g"/>
<dbReference type="eggNOG" id="KOG0650">
    <property type="taxonomic scope" value="Eukaryota"/>
</dbReference>
<dbReference type="HOGENOM" id="CLU_011390_0_1_1"/>
<dbReference type="InParanoid" id="Q6FLA4"/>
<dbReference type="OMA" id="MRPAKGE"/>
<dbReference type="Proteomes" id="UP000002428">
    <property type="component" value="Chromosome L"/>
</dbReference>
<dbReference type="GO" id="GO:0005654">
    <property type="term" value="C:nucleoplasm"/>
    <property type="evidence" value="ECO:0007669"/>
    <property type="project" value="UniProtKB-SubCell"/>
</dbReference>
<dbReference type="GO" id="GO:0070545">
    <property type="term" value="C:PeBoW complex"/>
    <property type="evidence" value="ECO:0007669"/>
    <property type="project" value="EnsemblFungi"/>
</dbReference>
<dbReference type="GO" id="GO:0030687">
    <property type="term" value="C:preribosome, large subunit precursor"/>
    <property type="evidence" value="ECO:0007669"/>
    <property type="project" value="UniProtKB-UniRule"/>
</dbReference>
<dbReference type="GO" id="GO:0070180">
    <property type="term" value="F:large ribosomal subunit rRNA binding"/>
    <property type="evidence" value="ECO:0007669"/>
    <property type="project" value="EnsemblFungi"/>
</dbReference>
<dbReference type="GO" id="GO:0043021">
    <property type="term" value="F:ribonucleoprotein complex binding"/>
    <property type="evidence" value="ECO:0007669"/>
    <property type="project" value="UniProtKB-UniRule"/>
</dbReference>
<dbReference type="GO" id="GO:0000466">
    <property type="term" value="P:maturation of 5.8S rRNA from tricistronic rRNA transcript (SSU-rRNA, 5.8S rRNA, LSU-rRNA)"/>
    <property type="evidence" value="ECO:0007669"/>
    <property type="project" value="UniProtKB-UniRule"/>
</dbReference>
<dbReference type="GO" id="GO:0000463">
    <property type="term" value="P:maturation of LSU-rRNA from tricistronic rRNA transcript (SSU-rRNA, 5.8S rRNA, LSU-rRNA)"/>
    <property type="evidence" value="ECO:0007669"/>
    <property type="project" value="UniProtKB-UniRule"/>
</dbReference>
<dbReference type="FunFam" id="2.130.10.10:FF:000061">
    <property type="entry name" value="Ribosome biogenesis protein BOP1 homolog"/>
    <property type="match status" value="1"/>
</dbReference>
<dbReference type="Gene3D" id="2.130.10.10">
    <property type="entry name" value="YVTN repeat-like/Quinoprotein amine dehydrogenase"/>
    <property type="match status" value="1"/>
</dbReference>
<dbReference type="HAMAP" id="MF_03027">
    <property type="entry name" value="BOP1"/>
    <property type="match status" value="1"/>
</dbReference>
<dbReference type="InterPro" id="IPR028598">
    <property type="entry name" value="BOP1/Erb1"/>
</dbReference>
<dbReference type="InterPro" id="IPR012953">
    <property type="entry name" value="BOP1_N_dom"/>
</dbReference>
<dbReference type="InterPro" id="IPR015943">
    <property type="entry name" value="WD40/YVTN_repeat-like_dom_sf"/>
</dbReference>
<dbReference type="InterPro" id="IPR019775">
    <property type="entry name" value="WD40_repeat_CS"/>
</dbReference>
<dbReference type="InterPro" id="IPR036322">
    <property type="entry name" value="WD40_repeat_dom_sf"/>
</dbReference>
<dbReference type="InterPro" id="IPR001680">
    <property type="entry name" value="WD40_rpt"/>
</dbReference>
<dbReference type="PANTHER" id="PTHR17605:SF0">
    <property type="entry name" value="RIBOSOME BIOGENESIS PROTEIN BOP1"/>
    <property type="match status" value="1"/>
</dbReference>
<dbReference type="PANTHER" id="PTHR17605">
    <property type="entry name" value="RIBOSOME BIOGENESIS PROTEIN BOP1 BLOCK OF PROLIFERATION 1 PROTEIN"/>
    <property type="match status" value="1"/>
</dbReference>
<dbReference type="Pfam" id="PF08145">
    <property type="entry name" value="BOP1NT"/>
    <property type="match status" value="1"/>
</dbReference>
<dbReference type="Pfam" id="PF00400">
    <property type="entry name" value="WD40"/>
    <property type="match status" value="3"/>
</dbReference>
<dbReference type="SMART" id="SM01035">
    <property type="entry name" value="BOP1NT"/>
    <property type="match status" value="1"/>
</dbReference>
<dbReference type="SMART" id="SM00320">
    <property type="entry name" value="WD40"/>
    <property type="match status" value="6"/>
</dbReference>
<dbReference type="SUPFAM" id="SSF50978">
    <property type="entry name" value="WD40 repeat-like"/>
    <property type="match status" value="1"/>
</dbReference>
<dbReference type="PROSITE" id="PS00678">
    <property type="entry name" value="WD_REPEATS_1"/>
    <property type="match status" value="1"/>
</dbReference>
<dbReference type="PROSITE" id="PS50082">
    <property type="entry name" value="WD_REPEATS_2"/>
    <property type="match status" value="2"/>
</dbReference>
<dbReference type="PROSITE" id="PS50294">
    <property type="entry name" value="WD_REPEATS_REGION"/>
    <property type="match status" value="2"/>
</dbReference>
<comment type="function">
    <text evidence="2">Component of the NOP7 complex, which is required for maturation of the 25S and 5.8S ribosomal RNAs and formation of the 60S ribosome.</text>
</comment>
<comment type="subunit">
    <text evidence="2">Component of the NOP7 complex, composed of ERB1, NOP7 and YTM1. The complex is held together by ERB1, which interacts with NOP7 via its N-terminal domain and with YTM1 via a high-affinity interaction between the seven-bladed beta-propeller domains of the 2 proteins. The NOP7 complex associates with the 66S pre-ribosome.</text>
</comment>
<comment type="subcellular location">
    <subcellularLocation>
        <location evidence="2">Nucleus</location>
        <location evidence="2">Nucleolus</location>
    </subcellularLocation>
    <subcellularLocation>
        <location evidence="2">Nucleus</location>
        <location evidence="2">Nucleoplasm</location>
    </subcellularLocation>
</comment>
<comment type="similarity">
    <text evidence="2">Belongs to the WD repeat BOP1/ERB1 family.</text>
</comment>
<proteinExistence type="inferred from homology"/>
<name>ERB1_CANGA</name>